<organism>
    <name type="scientific">Escherichia coli (strain SE11)</name>
    <dbReference type="NCBI Taxonomy" id="409438"/>
    <lineage>
        <taxon>Bacteria</taxon>
        <taxon>Pseudomonadati</taxon>
        <taxon>Pseudomonadota</taxon>
        <taxon>Gammaproteobacteria</taxon>
        <taxon>Enterobacterales</taxon>
        <taxon>Enterobacteriaceae</taxon>
        <taxon>Escherichia</taxon>
    </lineage>
</organism>
<evidence type="ECO:0000255" key="1">
    <source>
        <dbReference type="HAMAP-Rule" id="MF_01147"/>
    </source>
</evidence>
<keyword id="KW-0997">Cell inner membrane</keyword>
<keyword id="KW-1003">Cell membrane</keyword>
<keyword id="KW-0472">Membrane</keyword>
<keyword id="KW-0808">Transferase</keyword>
<keyword id="KW-0812">Transmembrane</keyword>
<keyword id="KW-1133">Transmembrane helix</keyword>
<accession>B6I6M3</accession>
<comment type="function">
    <text evidence="1">Catalyzes the transfer of the diacylglyceryl group from phosphatidylglycerol to the sulfhydryl group of the N-terminal cysteine of a prolipoprotein, the first step in the formation of mature lipoproteins.</text>
</comment>
<comment type="catalytic activity">
    <reaction evidence="1">
        <text>L-cysteinyl-[prolipoprotein] + a 1,2-diacyl-sn-glycero-3-phospho-(1'-sn-glycerol) = an S-1,2-diacyl-sn-glyceryl-L-cysteinyl-[prolipoprotein] + sn-glycerol 1-phosphate + H(+)</text>
        <dbReference type="Rhea" id="RHEA:56712"/>
        <dbReference type="Rhea" id="RHEA-COMP:14679"/>
        <dbReference type="Rhea" id="RHEA-COMP:14680"/>
        <dbReference type="ChEBI" id="CHEBI:15378"/>
        <dbReference type="ChEBI" id="CHEBI:29950"/>
        <dbReference type="ChEBI" id="CHEBI:57685"/>
        <dbReference type="ChEBI" id="CHEBI:64716"/>
        <dbReference type="ChEBI" id="CHEBI:140658"/>
        <dbReference type="EC" id="2.5.1.145"/>
    </reaction>
</comment>
<comment type="pathway">
    <text evidence="1">Protein modification; lipoprotein biosynthesis (diacylglyceryl transfer).</text>
</comment>
<comment type="subcellular location">
    <subcellularLocation>
        <location evidence="1">Cell inner membrane</location>
        <topology evidence="1">Multi-pass membrane protein</topology>
    </subcellularLocation>
</comment>
<comment type="similarity">
    <text evidence="1">Belongs to the Lgt family.</text>
</comment>
<gene>
    <name evidence="1" type="primary">lgt</name>
    <name type="ordered locus">ECSE_3085</name>
</gene>
<dbReference type="EC" id="2.5.1.145" evidence="1"/>
<dbReference type="EMBL" id="AP009240">
    <property type="protein sequence ID" value="BAG78609.1"/>
    <property type="molecule type" value="Genomic_DNA"/>
</dbReference>
<dbReference type="RefSeq" id="WP_000204658.1">
    <property type="nucleotide sequence ID" value="NC_011415.1"/>
</dbReference>
<dbReference type="SMR" id="B6I6M3"/>
<dbReference type="GeneID" id="93779170"/>
<dbReference type="KEGG" id="ecy:ECSE_3085"/>
<dbReference type="HOGENOM" id="CLU_013386_1_0_6"/>
<dbReference type="UniPathway" id="UPA00664"/>
<dbReference type="Proteomes" id="UP000008199">
    <property type="component" value="Chromosome"/>
</dbReference>
<dbReference type="GO" id="GO:0005886">
    <property type="term" value="C:plasma membrane"/>
    <property type="evidence" value="ECO:0007669"/>
    <property type="project" value="UniProtKB-SubCell"/>
</dbReference>
<dbReference type="GO" id="GO:0008961">
    <property type="term" value="F:phosphatidylglycerol-prolipoprotein diacylglyceryl transferase activity"/>
    <property type="evidence" value="ECO:0007669"/>
    <property type="project" value="UniProtKB-UniRule"/>
</dbReference>
<dbReference type="GO" id="GO:0042158">
    <property type="term" value="P:lipoprotein biosynthetic process"/>
    <property type="evidence" value="ECO:0007669"/>
    <property type="project" value="UniProtKB-UniRule"/>
</dbReference>
<dbReference type="HAMAP" id="MF_01147">
    <property type="entry name" value="Lgt"/>
    <property type="match status" value="1"/>
</dbReference>
<dbReference type="InterPro" id="IPR001640">
    <property type="entry name" value="Lgt"/>
</dbReference>
<dbReference type="NCBIfam" id="TIGR00544">
    <property type="entry name" value="lgt"/>
    <property type="match status" value="1"/>
</dbReference>
<dbReference type="PANTHER" id="PTHR30589:SF0">
    <property type="entry name" value="PHOSPHATIDYLGLYCEROL--PROLIPOPROTEIN DIACYLGLYCERYL TRANSFERASE"/>
    <property type="match status" value="1"/>
</dbReference>
<dbReference type="PANTHER" id="PTHR30589">
    <property type="entry name" value="PROLIPOPROTEIN DIACYLGLYCERYL TRANSFERASE"/>
    <property type="match status" value="1"/>
</dbReference>
<dbReference type="Pfam" id="PF01790">
    <property type="entry name" value="LGT"/>
    <property type="match status" value="1"/>
</dbReference>
<dbReference type="PROSITE" id="PS01311">
    <property type="entry name" value="LGT"/>
    <property type="match status" value="1"/>
</dbReference>
<protein>
    <recommendedName>
        <fullName evidence="1">Phosphatidylglycerol--prolipoprotein diacylglyceryl transferase</fullName>
        <ecNumber evidence="1">2.5.1.145</ecNumber>
    </recommendedName>
</protein>
<proteinExistence type="inferred from homology"/>
<name>LGT_ECOSE</name>
<reference key="1">
    <citation type="journal article" date="2008" name="DNA Res.">
        <title>Complete genome sequence and comparative analysis of the wild-type commensal Escherichia coli strain SE11 isolated from a healthy adult.</title>
        <authorList>
            <person name="Oshima K."/>
            <person name="Toh H."/>
            <person name="Ogura Y."/>
            <person name="Sasamoto H."/>
            <person name="Morita H."/>
            <person name="Park S.-H."/>
            <person name="Ooka T."/>
            <person name="Iyoda S."/>
            <person name="Taylor T.D."/>
            <person name="Hayashi T."/>
            <person name="Itoh K."/>
            <person name="Hattori M."/>
        </authorList>
    </citation>
    <scope>NUCLEOTIDE SEQUENCE [LARGE SCALE GENOMIC DNA]</scope>
    <source>
        <strain>SE11</strain>
    </source>
</reference>
<sequence>MTSSYLHFPEFDPVIFSIGPVALHWYGLMYLVGFIFAMWLATRRANRPGSGWTKNEVENLLYAGFLGVFLGGRIGYVLFYNFPQFMADPLYLFRVWDGGMSFHGGLIGVIVVMIIFARRTKRSFFQVSDFIAPLIPFGLGAGRLGNFINGELWGRVDPNFPFAMLFPGSRTEDILLLQTNPQWQSIFDTYGVLPRHPSQLYELLLEGVVLFIILNLYIRKPRPMGAVSGLFLIGYGAFRIIVEFFRQPDAQFTGAWVQYISMGQILSIPMIVAGVIMMVWAYRRSPQQHVS</sequence>
<feature type="chain" id="PRO_1000137426" description="Phosphatidylglycerol--prolipoprotein diacylglyceryl transferase">
    <location>
        <begin position="1"/>
        <end position="291"/>
    </location>
</feature>
<feature type="transmembrane region" description="Helical" evidence="1">
    <location>
        <begin position="21"/>
        <end position="41"/>
    </location>
</feature>
<feature type="transmembrane region" description="Helical" evidence="1">
    <location>
        <begin position="60"/>
        <end position="80"/>
    </location>
</feature>
<feature type="transmembrane region" description="Helical" evidence="1">
    <location>
        <begin position="96"/>
        <end position="116"/>
    </location>
</feature>
<feature type="transmembrane region" description="Helical" evidence="1">
    <location>
        <begin position="225"/>
        <end position="245"/>
    </location>
</feature>
<feature type="transmembrane region" description="Helical" evidence="1">
    <location>
        <begin position="260"/>
        <end position="280"/>
    </location>
</feature>
<feature type="binding site" evidence="1">
    <location>
        <position position="143"/>
    </location>
    <ligand>
        <name>a 1,2-diacyl-sn-glycero-3-phospho-(1'-sn-glycerol)</name>
        <dbReference type="ChEBI" id="CHEBI:64716"/>
    </ligand>
</feature>